<evidence type="ECO:0000255" key="1">
    <source>
        <dbReference type="HAMAP-Rule" id="MF_00402"/>
    </source>
</evidence>
<evidence type="ECO:0000305" key="2"/>
<keyword id="KW-1185">Reference proteome</keyword>
<keyword id="KW-0687">Ribonucleoprotein</keyword>
<keyword id="KW-0689">Ribosomal protein</keyword>
<protein>
    <recommendedName>
        <fullName evidence="1">Large ribosomal subunit protein bL19</fullName>
    </recommendedName>
    <alternativeName>
        <fullName evidence="2">50S ribosomal protein L19</fullName>
    </alternativeName>
</protein>
<reference key="1">
    <citation type="journal article" date="2011" name="J. Bacteriol.">
        <title>Complete genome sequence and updated annotation of Desulfovibrio alaskensis G20.</title>
        <authorList>
            <person name="Hauser L.J."/>
            <person name="Land M.L."/>
            <person name="Brown S.D."/>
            <person name="Larimer F."/>
            <person name="Keller K.L."/>
            <person name="Rapp-Giles B.J."/>
            <person name="Price M.N."/>
            <person name="Lin M."/>
            <person name="Bruce D.C."/>
            <person name="Detter J.C."/>
            <person name="Tapia R."/>
            <person name="Han C.S."/>
            <person name="Goodwin L.A."/>
            <person name="Cheng J.F."/>
            <person name="Pitluck S."/>
            <person name="Copeland A."/>
            <person name="Lucas S."/>
            <person name="Nolan M."/>
            <person name="Lapidus A.L."/>
            <person name="Palumbo A.V."/>
            <person name="Wall J.D."/>
        </authorList>
    </citation>
    <scope>NUCLEOTIDE SEQUENCE [LARGE SCALE GENOMIC DNA]</scope>
    <source>
        <strain>ATCC BAA-1058 / DSM 17464 / G20</strain>
    </source>
</reference>
<sequence>MNIIKKIELEQMRLDIPKFKSGDSVKVHMRIVEGEKERIQVFHGNVIRISRGTTNATFTVRKISNGVGVERVFPMHSPFIDRIEVVQQGRVRRSRLYYLRNLKGKAARIKPLKTW</sequence>
<dbReference type="EMBL" id="CP000112">
    <property type="protein sequence ID" value="ABB37896.1"/>
    <property type="molecule type" value="Genomic_DNA"/>
</dbReference>
<dbReference type="RefSeq" id="WP_011367126.1">
    <property type="nucleotide sequence ID" value="NC_007519.1"/>
</dbReference>
<dbReference type="SMR" id="Q313K0"/>
<dbReference type="STRING" id="207559.Dde_1095"/>
<dbReference type="KEGG" id="dde:Dde_1095"/>
<dbReference type="eggNOG" id="COG0335">
    <property type="taxonomic scope" value="Bacteria"/>
</dbReference>
<dbReference type="HOGENOM" id="CLU_103507_2_2_7"/>
<dbReference type="Proteomes" id="UP000002710">
    <property type="component" value="Chromosome"/>
</dbReference>
<dbReference type="GO" id="GO:0022625">
    <property type="term" value="C:cytosolic large ribosomal subunit"/>
    <property type="evidence" value="ECO:0007669"/>
    <property type="project" value="TreeGrafter"/>
</dbReference>
<dbReference type="GO" id="GO:0003735">
    <property type="term" value="F:structural constituent of ribosome"/>
    <property type="evidence" value="ECO:0007669"/>
    <property type="project" value="InterPro"/>
</dbReference>
<dbReference type="GO" id="GO:0006412">
    <property type="term" value="P:translation"/>
    <property type="evidence" value="ECO:0007669"/>
    <property type="project" value="UniProtKB-UniRule"/>
</dbReference>
<dbReference type="FunFam" id="2.30.30.790:FF:000001">
    <property type="entry name" value="50S ribosomal protein L19"/>
    <property type="match status" value="1"/>
</dbReference>
<dbReference type="Gene3D" id="2.30.30.790">
    <property type="match status" value="1"/>
</dbReference>
<dbReference type="HAMAP" id="MF_00402">
    <property type="entry name" value="Ribosomal_bL19"/>
    <property type="match status" value="1"/>
</dbReference>
<dbReference type="InterPro" id="IPR001857">
    <property type="entry name" value="Ribosomal_bL19"/>
</dbReference>
<dbReference type="InterPro" id="IPR018257">
    <property type="entry name" value="Ribosomal_bL19_CS"/>
</dbReference>
<dbReference type="InterPro" id="IPR038657">
    <property type="entry name" value="Ribosomal_bL19_sf"/>
</dbReference>
<dbReference type="InterPro" id="IPR008991">
    <property type="entry name" value="Translation_prot_SH3-like_sf"/>
</dbReference>
<dbReference type="NCBIfam" id="TIGR01024">
    <property type="entry name" value="rplS_bact"/>
    <property type="match status" value="1"/>
</dbReference>
<dbReference type="PANTHER" id="PTHR15680:SF9">
    <property type="entry name" value="LARGE RIBOSOMAL SUBUNIT PROTEIN BL19M"/>
    <property type="match status" value="1"/>
</dbReference>
<dbReference type="PANTHER" id="PTHR15680">
    <property type="entry name" value="RIBOSOMAL PROTEIN L19"/>
    <property type="match status" value="1"/>
</dbReference>
<dbReference type="Pfam" id="PF01245">
    <property type="entry name" value="Ribosomal_L19"/>
    <property type="match status" value="1"/>
</dbReference>
<dbReference type="PIRSF" id="PIRSF002191">
    <property type="entry name" value="Ribosomal_L19"/>
    <property type="match status" value="1"/>
</dbReference>
<dbReference type="PRINTS" id="PR00061">
    <property type="entry name" value="RIBOSOMALL19"/>
</dbReference>
<dbReference type="SUPFAM" id="SSF50104">
    <property type="entry name" value="Translation proteins SH3-like domain"/>
    <property type="match status" value="1"/>
</dbReference>
<dbReference type="PROSITE" id="PS01015">
    <property type="entry name" value="RIBOSOMAL_L19"/>
    <property type="match status" value="1"/>
</dbReference>
<comment type="function">
    <text evidence="1">This protein is located at the 30S-50S ribosomal subunit interface and may play a role in the structure and function of the aminoacyl-tRNA binding site.</text>
</comment>
<comment type="similarity">
    <text evidence="1">Belongs to the bacterial ribosomal protein bL19 family.</text>
</comment>
<gene>
    <name evidence="1" type="primary">rplS</name>
    <name type="ordered locus">Dde_1095</name>
</gene>
<accession>Q313K0</accession>
<organism>
    <name type="scientific">Oleidesulfovibrio alaskensis (strain ATCC BAA-1058 / DSM 17464 / G20)</name>
    <name type="common">Desulfovibrio alaskensis</name>
    <dbReference type="NCBI Taxonomy" id="207559"/>
    <lineage>
        <taxon>Bacteria</taxon>
        <taxon>Pseudomonadati</taxon>
        <taxon>Thermodesulfobacteriota</taxon>
        <taxon>Desulfovibrionia</taxon>
        <taxon>Desulfovibrionales</taxon>
        <taxon>Desulfovibrionaceae</taxon>
        <taxon>Oleidesulfovibrio</taxon>
    </lineage>
</organism>
<name>RL19_OLEA2</name>
<feature type="chain" id="PRO_0000226845" description="Large ribosomal subunit protein bL19">
    <location>
        <begin position="1"/>
        <end position="115"/>
    </location>
</feature>
<proteinExistence type="inferred from homology"/>